<protein>
    <recommendedName>
        <fullName evidence="1">Proteasome subunit alpha</fullName>
    </recommendedName>
    <alternativeName>
        <fullName evidence="1">20S proteasome alpha subunit</fullName>
    </alternativeName>
    <alternativeName>
        <fullName evidence="1">Proteasome core protein PsmA</fullName>
    </alternativeName>
</protein>
<evidence type="ECO:0000255" key="1">
    <source>
        <dbReference type="HAMAP-Rule" id="MF_00289"/>
    </source>
</evidence>
<gene>
    <name evidence="1" type="primary">psmA</name>
    <name type="ordered locus">MMP0251</name>
</gene>
<feature type="chain" id="PRO_0000124177" description="Proteasome subunit alpha">
    <location>
        <begin position="1"/>
        <end position="259"/>
    </location>
</feature>
<reference key="1">
    <citation type="journal article" date="2004" name="J. Bacteriol.">
        <title>Complete genome sequence of the genetically tractable hydrogenotrophic methanogen Methanococcus maripaludis.</title>
        <authorList>
            <person name="Hendrickson E.L."/>
            <person name="Kaul R."/>
            <person name="Zhou Y."/>
            <person name="Bovee D."/>
            <person name="Chapman P."/>
            <person name="Chung J."/>
            <person name="Conway de Macario E."/>
            <person name="Dodsworth J.A."/>
            <person name="Gillett W."/>
            <person name="Graham D.E."/>
            <person name="Hackett M."/>
            <person name="Haydock A.K."/>
            <person name="Kang A."/>
            <person name="Land M.L."/>
            <person name="Levy R."/>
            <person name="Lie T.J."/>
            <person name="Major T.A."/>
            <person name="Moore B.C."/>
            <person name="Porat I."/>
            <person name="Palmeiri A."/>
            <person name="Rouse G."/>
            <person name="Saenphimmachak C."/>
            <person name="Soell D."/>
            <person name="Van Dien S."/>
            <person name="Wang T."/>
            <person name="Whitman W.B."/>
            <person name="Xia Q."/>
            <person name="Zhang Y."/>
            <person name="Larimer F.W."/>
            <person name="Olson M.V."/>
            <person name="Leigh J.A."/>
        </authorList>
    </citation>
    <scope>NUCLEOTIDE SEQUENCE [LARGE SCALE GENOMIC DNA]</scope>
    <source>
        <strain>DSM 14266 / JCM 13030 / NBRC 101832 / S2 / LL</strain>
    </source>
</reference>
<accession>Q6M0L9</accession>
<sequence length="259" mass="28514">MQQMVPASGYDRAITIFSPEGRLYQVEYAREAVRRGTTAVGIKCKDGVVLAVDRRITSKLIDVSSIEKIFQIDDHIVAATSGLVADARVLIDRARIEAQMNRVSYGEAITVEALAKKICDIKQAYTQHGGARPFGLALLITGIDRHSARLFETDPSGALIEYKATAIGSGRPIAMEVLESKYDENMTVSEGMELALYALSKTTEELKPENIDMAIIKDSGKLVEKISVDEIEKIVKAVYEKVKAEEEEAEKNKGEEDSE</sequence>
<proteinExistence type="evidence at protein level"/>
<name>PSA_METMP</name>
<comment type="function">
    <text evidence="1">Component of the proteasome core, a large protease complex with broad specificity involved in protein degradation.</text>
</comment>
<comment type="activity regulation">
    <text evidence="1">The formation of the proteasomal ATPase PAN-20S proteasome complex, via the docking of the C-termini of PAN into the intersubunit pockets in the alpha-rings, triggers opening of the gate for substrate entry. Interconversion between the open-gate and close-gate conformations leads to a dynamic regulation of the 20S proteasome proteolysis activity.</text>
</comment>
<comment type="subunit">
    <text evidence="1">The 20S proteasome core is composed of 14 alpha and 14 beta subunits that assemble into four stacked heptameric rings, resulting in a barrel-shaped structure. The two inner rings, each composed of seven catalytic beta subunits, are sandwiched by two outer rings, each composed of seven alpha subunits. The catalytic chamber with the active sites is on the inside of the barrel. Has a gated structure, the ends of the cylinder being occluded by the N-termini of the alpha-subunits. Is capped at one or both ends by the proteasome regulatory ATPase, PAN.</text>
</comment>
<comment type="interaction">
    <interactant intactId="EBI-15922263">
        <id>Q6M0L9</id>
    </interactant>
    <interactant intactId="EBI-15922302">
        <id>Q6LYS4</id>
        <label>MMP0914</label>
    </interactant>
    <organismsDiffer>false</organismsDiffer>
    <experiments>3</experiments>
</comment>
<comment type="interaction">
    <interactant intactId="EBI-15922263">
        <id>Q6M0L9</id>
    </interactant>
    <interactant intactId="EBI-15922282">
        <id>Q6LZD4</id>
        <label>psmB</label>
    </interactant>
    <organismsDiffer>false</organismsDiffer>
    <experiments>7</experiments>
</comment>
<comment type="subcellular location">
    <subcellularLocation>
        <location evidence="1">Cytoplasm</location>
    </subcellularLocation>
</comment>
<comment type="similarity">
    <text evidence="1">Belongs to the peptidase T1A family.</text>
</comment>
<organism>
    <name type="scientific">Methanococcus maripaludis (strain DSM 14266 / JCM 13030 / NBRC 101832 / S2 / LL)</name>
    <dbReference type="NCBI Taxonomy" id="267377"/>
    <lineage>
        <taxon>Archaea</taxon>
        <taxon>Methanobacteriati</taxon>
        <taxon>Methanobacteriota</taxon>
        <taxon>Methanomada group</taxon>
        <taxon>Methanococci</taxon>
        <taxon>Methanococcales</taxon>
        <taxon>Methanococcaceae</taxon>
        <taxon>Methanococcus</taxon>
    </lineage>
</organism>
<keyword id="KW-0963">Cytoplasm</keyword>
<keyword id="KW-0647">Proteasome</keyword>
<keyword id="KW-1185">Reference proteome</keyword>
<dbReference type="EMBL" id="BX950229">
    <property type="protein sequence ID" value="CAF29807.1"/>
    <property type="molecule type" value="Genomic_DNA"/>
</dbReference>
<dbReference type="RefSeq" id="WP_011170195.1">
    <property type="nucleotide sequence ID" value="NC_005791.1"/>
</dbReference>
<dbReference type="SMR" id="Q6M0L9"/>
<dbReference type="DIP" id="DIP-59085N"/>
<dbReference type="IntAct" id="Q6M0L9">
    <property type="interactions" value="3"/>
</dbReference>
<dbReference type="STRING" id="267377.MMP0251"/>
<dbReference type="EnsemblBacteria" id="CAF29807">
    <property type="protein sequence ID" value="CAF29807"/>
    <property type="gene ID" value="MMP0251"/>
</dbReference>
<dbReference type="GeneID" id="10981681"/>
<dbReference type="GeneID" id="2761045"/>
<dbReference type="KEGG" id="mmp:MMP0251"/>
<dbReference type="PATRIC" id="fig|267377.15.peg.254"/>
<dbReference type="eggNOG" id="arCOG00971">
    <property type="taxonomic scope" value="Archaea"/>
</dbReference>
<dbReference type="HOGENOM" id="CLU_035750_4_1_2"/>
<dbReference type="OrthoDB" id="9421at2157"/>
<dbReference type="Proteomes" id="UP000000590">
    <property type="component" value="Chromosome"/>
</dbReference>
<dbReference type="GO" id="GO:0005737">
    <property type="term" value="C:cytoplasm"/>
    <property type="evidence" value="ECO:0007669"/>
    <property type="project" value="UniProtKB-SubCell"/>
</dbReference>
<dbReference type="GO" id="GO:0019773">
    <property type="term" value="C:proteasome core complex, alpha-subunit complex"/>
    <property type="evidence" value="ECO:0000250"/>
    <property type="project" value="UniProtKB"/>
</dbReference>
<dbReference type="GO" id="GO:0004298">
    <property type="term" value="F:threonine-type endopeptidase activity"/>
    <property type="evidence" value="ECO:0007669"/>
    <property type="project" value="InterPro"/>
</dbReference>
<dbReference type="GO" id="GO:0010498">
    <property type="term" value="P:proteasomal protein catabolic process"/>
    <property type="evidence" value="ECO:0007669"/>
    <property type="project" value="UniProtKB-UniRule"/>
</dbReference>
<dbReference type="GO" id="GO:0006511">
    <property type="term" value="P:ubiquitin-dependent protein catabolic process"/>
    <property type="evidence" value="ECO:0007669"/>
    <property type="project" value="InterPro"/>
</dbReference>
<dbReference type="CDD" id="cd03756">
    <property type="entry name" value="proteasome_alpha_archeal"/>
    <property type="match status" value="1"/>
</dbReference>
<dbReference type="FunFam" id="3.60.20.10:FF:000004">
    <property type="entry name" value="Proteasome subunit alpha type-4"/>
    <property type="match status" value="1"/>
</dbReference>
<dbReference type="Gene3D" id="3.60.20.10">
    <property type="entry name" value="Glutamine Phosphoribosylpyrophosphate, subunit 1, domain 1"/>
    <property type="match status" value="1"/>
</dbReference>
<dbReference type="HAMAP" id="MF_00289_A">
    <property type="entry name" value="Proteasome_A_A"/>
    <property type="match status" value="1"/>
</dbReference>
<dbReference type="InterPro" id="IPR029055">
    <property type="entry name" value="Ntn_hydrolases_N"/>
</dbReference>
<dbReference type="InterPro" id="IPR050115">
    <property type="entry name" value="Proteasome_alpha"/>
</dbReference>
<dbReference type="InterPro" id="IPR023332">
    <property type="entry name" value="Proteasome_alpha-type"/>
</dbReference>
<dbReference type="InterPro" id="IPR019982">
    <property type="entry name" value="Proteasome_asu_arc"/>
</dbReference>
<dbReference type="InterPro" id="IPR000426">
    <property type="entry name" value="Proteasome_asu_N"/>
</dbReference>
<dbReference type="InterPro" id="IPR001353">
    <property type="entry name" value="Proteasome_sua/b"/>
</dbReference>
<dbReference type="NCBIfam" id="TIGR03633">
    <property type="entry name" value="arc_protsome_A"/>
    <property type="match status" value="1"/>
</dbReference>
<dbReference type="NCBIfam" id="NF003075">
    <property type="entry name" value="PRK03996.1"/>
    <property type="match status" value="1"/>
</dbReference>
<dbReference type="PANTHER" id="PTHR11599">
    <property type="entry name" value="PROTEASOME SUBUNIT ALPHA/BETA"/>
    <property type="match status" value="1"/>
</dbReference>
<dbReference type="Pfam" id="PF00227">
    <property type="entry name" value="Proteasome"/>
    <property type="match status" value="1"/>
</dbReference>
<dbReference type="Pfam" id="PF10584">
    <property type="entry name" value="Proteasome_A_N"/>
    <property type="match status" value="1"/>
</dbReference>
<dbReference type="SMART" id="SM00948">
    <property type="entry name" value="Proteasome_A_N"/>
    <property type="match status" value="1"/>
</dbReference>
<dbReference type="SUPFAM" id="SSF56235">
    <property type="entry name" value="N-terminal nucleophile aminohydrolases (Ntn hydrolases)"/>
    <property type="match status" value="1"/>
</dbReference>
<dbReference type="PROSITE" id="PS00388">
    <property type="entry name" value="PROTEASOME_ALPHA_1"/>
    <property type="match status" value="1"/>
</dbReference>
<dbReference type="PROSITE" id="PS51475">
    <property type="entry name" value="PROTEASOME_ALPHA_2"/>
    <property type="match status" value="1"/>
</dbReference>